<reference key="1">
    <citation type="submission" date="2005-11" db="EMBL/GenBank/DDBJ databases">
        <authorList>
            <consortium name="NIH - Mammalian Gene Collection (MGC) project"/>
        </authorList>
    </citation>
    <scope>NUCLEOTIDE SEQUENCE [LARGE SCALE MRNA]</scope>
    <source>
        <strain>Crossbred X Angus</strain>
        <tissue>Liver</tissue>
    </source>
</reference>
<organism>
    <name type="scientific">Bos taurus</name>
    <name type="common">Bovine</name>
    <dbReference type="NCBI Taxonomy" id="9913"/>
    <lineage>
        <taxon>Eukaryota</taxon>
        <taxon>Metazoa</taxon>
        <taxon>Chordata</taxon>
        <taxon>Craniata</taxon>
        <taxon>Vertebrata</taxon>
        <taxon>Euteleostomi</taxon>
        <taxon>Mammalia</taxon>
        <taxon>Eutheria</taxon>
        <taxon>Laurasiatheria</taxon>
        <taxon>Artiodactyla</taxon>
        <taxon>Ruminantia</taxon>
        <taxon>Pecora</taxon>
        <taxon>Bovidae</taxon>
        <taxon>Bovinae</taxon>
        <taxon>Bos</taxon>
    </lineage>
</organism>
<proteinExistence type="evidence at transcript level"/>
<sequence length="156" mass="17488">MWKRIDHQLKIKAGDGPQAGQFKELGPGREPAVPHPLSLSEFQTVPVFEDISQHVKEVGSQLVKKVNAIFQLDITKDGKTVHQWTIDLKNGSGDTYRGPARLPADTVFTIPEPVFMELILGKMNPQKAFLAGKFKVSGKVLLGQKLERVFKDWAKW</sequence>
<dbReference type="EMBL" id="BC109730">
    <property type="protein sequence ID" value="AAI09731.1"/>
    <property type="molecule type" value="mRNA"/>
</dbReference>
<dbReference type="RefSeq" id="NP_001035597.1">
    <property type="nucleotide sequence ID" value="NM_001040507.2"/>
</dbReference>
<dbReference type="SMR" id="Q2TBS3"/>
<dbReference type="FunCoup" id="Q2TBS3">
    <property type="interactions" value="944"/>
</dbReference>
<dbReference type="STRING" id="9913.ENSBTAP00000006853"/>
<dbReference type="PaxDb" id="9913-ENSBTAP00000006853"/>
<dbReference type="Ensembl" id="ENSBTAT00000090439.1">
    <property type="protein sequence ID" value="ENSBTAP00000086529.1"/>
    <property type="gene ID" value="ENSBTAG00000005202.4"/>
</dbReference>
<dbReference type="GeneID" id="505971"/>
<dbReference type="KEGG" id="bta:505971"/>
<dbReference type="CTD" id="140856"/>
<dbReference type="VEuPathDB" id="HostDB:ENSBTAG00000005202"/>
<dbReference type="VGNC" id="VGNC:34362">
    <property type="gene designation" value="SCP2D1"/>
</dbReference>
<dbReference type="eggNOG" id="KOG4170">
    <property type="taxonomic scope" value="Eukaryota"/>
</dbReference>
<dbReference type="GeneTree" id="ENSGT00940000154327"/>
<dbReference type="HOGENOM" id="CLU_105945_3_1_1"/>
<dbReference type="InParanoid" id="Q2TBS3"/>
<dbReference type="OMA" id="WDIMNGG"/>
<dbReference type="OrthoDB" id="3592703at2759"/>
<dbReference type="TreeFam" id="TF343860"/>
<dbReference type="Proteomes" id="UP000009136">
    <property type="component" value="Chromosome 13"/>
</dbReference>
<dbReference type="Bgee" id="ENSBTAG00000005202">
    <property type="expression patterns" value="Expressed in semen and 86 other cell types or tissues"/>
</dbReference>
<dbReference type="GO" id="GO:0005829">
    <property type="term" value="C:cytosol"/>
    <property type="evidence" value="ECO:0000318"/>
    <property type="project" value="GO_Central"/>
</dbReference>
<dbReference type="FunFam" id="3.30.1050.10:FF:000001">
    <property type="entry name" value="Putative Non-specific lipid-transfer protein"/>
    <property type="match status" value="1"/>
</dbReference>
<dbReference type="Gene3D" id="3.30.1050.10">
    <property type="entry name" value="SCP2 sterol-binding domain"/>
    <property type="match status" value="1"/>
</dbReference>
<dbReference type="InterPro" id="IPR003033">
    <property type="entry name" value="SCP2_sterol-bd_dom"/>
</dbReference>
<dbReference type="InterPro" id="IPR036527">
    <property type="entry name" value="SCP2_sterol-bd_dom_sf"/>
</dbReference>
<dbReference type="PANTHER" id="PTHR10094:SF25">
    <property type="entry name" value="SCP2 STEROL-BINDING DOMAIN-CONTAINING PROTEIN 1"/>
    <property type="match status" value="1"/>
</dbReference>
<dbReference type="PANTHER" id="PTHR10094">
    <property type="entry name" value="STEROL CARRIER PROTEIN 2 SCP-2 FAMILY PROTEIN"/>
    <property type="match status" value="1"/>
</dbReference>
<dbReference type="Pfam" id="PF02036">
    <property type="entry name" value="SCP2"/>
    <property type="match status" value="1"/>
</dbReference>
<dbReference type="SUPFAM" id="SSF55718">
    <property type="entry name" value="SCP-like"/>
    <property type="match status" value="1"/>
</dbReference>
<protein>
    <recommendedName>
        <fullName>SCP2 sterol-binding domain-containing protein 1</fullName>
    </recommendedName>
</protein>
<feature type="chain" id="PRO_0000274819" description="SCP2 sterol-binding domain-containing protein 1">
    <location>
        <begin position="1"/>
        <end position="156"/>
    </location>
</feature>
<feature type="domain" description="SCP2">
    <location>
        <begin position="44"/>
        <end position="156"/>
    </location>
</feature>
<keyword id="KW-1185">Reference proteome</keyword>
<name>SCP2D_BOVIN</name>
<gene>
    <name type="primary">SCP2D1</name>
</gene>
<accession>Q2TBS3</accession>